<comment type="function">
    <text evidence="1">Catalyzes the facilitated diffusion of 2-acyl-glycero-3-phosphoethanolamine (2-acyl-GPE) into the cell.</text>
</comment>
<comment type="subcellular location">
    <subcellularLocation>
        <location evidence="1">Cell inner membrane</location>
        <topology evidence="1">Multi-pass membrane protein</topology>
    </subcellularLocation>
</comment>
<comment type="similarity">
    <text evidence="1">Belongs to the major facilitator superfamily. LplT (TC 2.A.1.42) family.</text>
</comment>
<organism>
    <name type="scientific">Escherichia coli (strain K12 / DH10B)</name>
    <dbReference type="NCBI Taxonomy" id="316385"/>
    <lineage>
        <taxon>Bacteria</taxon>
        <taxon>Pseudomonadati</taxon>
        <taxon>Pseudomonadota</taxon>
        <taxon>Gammaproteobacteria</taxon>
        <taxon>Enterobacterales</taxon>
        <taxon>Enterobacteriaceae</taxon>
        <taxon>Escherichia</taxon>
    </lineage>
</organism>
<feature type="chain" id="PRO_1000201263" description="Lysophospholipid transporter LplT">
    <location>
        <begin position="1"/>
        <end position="397"/>
    </location>
</feature>
<feature type="topological domain" description="Periplasmic" evidence="1">
    <location>
        <begin position="1"/>
        <end position="17"/>
    </location>
</feature>
<feature type="transmembrane region" description="Helical" evidence="1">
    <location>
        <begin position="18"/>
        <end position="38"/>
    </location>
</feature>
<feature type="topological domain" description="Cytoplasmic" evidence="1">
    <location>
        <begin position="39"/>
        <end position="52"/>
    </location>
</feature>
<feature type="transmembrane region" description="Helical" evidence="1">
    <location>
        <begin position="53"/>
        <end position="73"/>
    </location>
</feature>
<feature type="topological domain" description="Periplasmic" evidence="1">
    <location>
        <begin position="74"/>
        <end position="90"/>
    </location>
</feature>
<feature type="transmembrane region" description="Helical" evidence="1">
    <location>
        <begin position="91"/>
        <end position="111"/>
    </location>
</feature>
<feature type="topological domain" description="Cytoplasmic" evidence="1">
    <location>
        <begin position="112"/>
        <end position="144"/>
    </location>
</feature>
<feature type="transmembrane region" description="Helical" evidence="1">
    <location>
        <begin position="145"/>
        <end position="165"/>
    </location>
</feature>
<feature type="topological domain" description="Periplasmic" evidence="1">
    <location>
        <position position="166"/>
    </location>
</feature>
<feature type="transmembrane region" description="Helical" evidence="1">
    <location>
        <begin position="167"/>
        <end position="187"/>
    </location>
</feature>
<feature type="topological domain" description="Cytoplasmic" evidence="1">
    <location>
        <begin position="188"/>
        <end position="226"/>
    </location>
</feature>
<feature type="transmembrane region" description="Helical" evidence="1">
    <location>
        <begin position="227"/>
        <end position="247"/>
    </location>
</feature>
<feature type="topological domain" description="Periplasmic" evidence="1">
    <location>
        <begin position="248"/>
        <end position="256"/>
    </location>
</feature>
<feature type="transmembrane region" description="Helical" evidence="1">
    <location>
        <begin position="257"/>
        <end position="277"/>
    </location>
</feature>
<feature type="topological domain" description="Cytoplasmic" evidence="1">
    <location>
        <begin position="278"/>
        <end position="280"/>
    </location>
</feature>
<feature type="transmembrane region" description="Helical" evidence="1">
    <location>
        <begin position="281"/>
        <end position="301"/>
    </location>
</feature>
<feature type="topological domain" description="Periplasmic" evidence="1">
    <location>
        <begin position="302"/>
        <end position="304"/>
    </location>
</feature>
<feature type="transmembrane region" description="Helical" evidence="1">
    <location>
        <begin position="305"/>
        <end position="325"/>
    </location>
</feature>
<feature type="topological domain" description="Cytoplasmic" evidence="1">
    <location>
        <begin position="326"/>
        <end position="343"/>
    </location>
</feature>
<feature type="transmembrane region" description="Helical" evidence="1">
    <location>
        <begin position="344"/>
        <end position="364"/>
    </location>
</feature>
<feature type="topological domain" description="Periplasmic" evidence="1">
    <location>
        <begin position="365"/>
        <end position="366"/>
    </location>
</feature>
<feature type="transmembrane region" description="Helical" evidence="1">
    <location>
        <begin position="367"/>
        <end position="387"/>
    </location>
</feature>
<feature type="topological domain" description="Cytoplasmic" evidence="1">
    <location>
        <begin position="388"/>
        <end position="397"/>
    </location>
</feature>
<name>LPLT_ECODH</name>
<accession>B1XDP1</accession>
<keyword id="KW-0997">Cell inner membrane</keyword>
<keyword id="KW-1003">Cell membrane</keyword>
<keyword id="KW-0445">Lipid transport</keyword>
<keyword id="KW-0472">Membrane</keyword>
<keyword id="KW-0812">Transmembrane</keyword>
<keyword id="KW-1133">Transmembrane helix</keyword>
<keyword id="KW-0813">Transport</keyword>
<dbReference type="EMBL" id="CP000948">
    <property type="protein sequence ID" value="ACB03945.1"/>
    <property type="molecule type" value="Genomic_DNA"/>
</dbReference>
<dbReference type="RefSeq" id="WP_000004616.1">
    <property type="nucleotide sequence ID" value="NC_010473.1"/>
</dbReference>
<dbReference type="SMR" id="B1XDP1"/>
<dbReference type="KEGG" id="ecd:ECDH10B_3005"/>
<dbReference type="HOGENOM" id="CLU_047399_0_0_6"/>
<dbReference type="GO" id="GO:0005886">
    <property type="term" value="C:plasma membrane"/>
    <property type="evidence" value="ECO:0007669"/>
    <property type="project" value="UniProtKB-SubCell"/>
</dbReference>
<dbReference type="GO" id="GO:0051978">
    <property type="term" value="F:lysophospholipid:sodium symporter activity"/>
    <property type="evidence" value="ECO:0007669"/>
    <property type="project" value="InterPro"/>
</dbReference>
<dbReference type="CDD" id="cd06173">
    <property type="entry name" value="MFS_MefA_like"/>
    <property type="match status" value="1"/>
</dbReference>
<dbReference type="FunFam" id="1.20.1250.20:FF:000091">
    <property type="entry name" value="Lysophospholipid transporter LplT"/>
    <property type="match status" value="1"/>
</dbReference>
<dbReference type="Gene3D" id="1.20.1250.20">
    <property type="entry name" value="MFS general substrate transporter like domains"/>
    <property type="match status" value="1"/>
</dbReference>
<dbReference type="HAMAP" id="MF_01585">
    <property type="entry name" value="MFS_LplT"/>
    <property type="match status" value="1"/>
</dbReference>
<dbReference type="InterPro" id="IPR023727">
    <property type="entry name" value="LysoPLipid__transptr_LplT"/>
</dbReference>
<dbReference type="InterPro" id="IPR011701">
    <property type="entry name" value="MFS"/>
</dbReference>
<dbReference type="InterPro" id="IPR036259">
    <property type="entry name" value="MFS_trans_sf"/>
</dbReference>
<dbReference type="NCBIfam" id="NF008397">
    <property type="entry name" value="PRK11195.1"/>
    <property type="match status" value="1"/>
</dbReference>
<dbReference type="PANTHER" id="PTHR43266">
    <property type="entry name" value="MACROLIDE-EFFLUX PROTEIN"/>
    <property type="match status" value="1"/>
</dbReference>
<dbReference type="PANTHER" id="PTHR43266:SF2">
    <property type="entry name" value="MAJOR FACILITATOR SUPERFAMILY (MFS) PROFILE DOMAIN-CONTAINING PROTEIN"/>
    <property type="match status" value="1"/>
</dbReference>
<dbReference type="Pfam" id="PF07690">
    <property type="entry name" value="MFS_1"/>
    <property type="match status" value="1"/>
</dbReference>
<dbReference type="SUPFAM" id="SSF103473">
    <property type="entry name" value="MFS general substrate transporter"/>
    <property type="match status" value="1"/>
</dbReference>
<reference key="1">
    <citation type="journal article" date="2008" name="J. Bacteriol.">
        <title>The complete genome sequence of Escherichia coli DH10B: insights into the biology of a laboratory workhorse.</title>
        <authorList>
            <person name="Durfee T."/>
            <person name="Nelson R."/>
            <person name="Baldwin S."/>
            <person name="Plunkett G. III"/>
            <person name="Burland V."/>
            <person name="Mau B."/>
            <person name="Petrosino J.F."/>
            <person name="Qin X."/>
            <person name="Muzny D.M."/>
            <person name="Ayele M."/>
            <person name="Gibbs R.A."/>
            <person name="Csorgo B."/>
            <person name="Posfai G."/>
            <person name="Weinstock G.M."/>
            <person name="Blattner F.R."/>
        </authorList>
    </citation>
    <scope>NUCLEOTIDE SEQUENCE [LARGE SCALE GENOMIC DNA]</scope>
    <source>
        <strain>K12 / DH10B</strain>
    </source>
</reference>
<evidence type="ECO:0000255" key="1">
    <source>
        <dbReference type="HAMAP-Rule" id="MF_01585"/>
    </source>
</evidence>
<gene>
    <name evidence="1" type="primary">lplT</name>
    <name type="ordered locus">ECDH10B_3005</name>
</gene>
<proteinExistence type="inferred from homology"/>
<sequence length="397" mass="41656">MSESVHTNTSLWSKGMKAVIVAQFLSAFGDNALLFATLALLKAQFYPEWSQPILQMVFVGAYILFAPFVGQVADSFAKGRVMMFANGLKLLGAASICFGINPFLGYTLVGVGAAAYSPAKYGILGELTTGSKLVKANGLMEASTIAAILLGSVAGGVLADWHVLVALAACALAYGGAVVANIYIPKLAAARPGQSWNLINMTRSFLNACTSLWRNGETRFSLVGTSLFWGAGVTLRFLLVLWVPVALGITDNATPTYLNAMVAIGIVVGAGAAAKLVTLETVSRCMPAGILIGVVVLIFSLQHELLPAYALLMLIGVMGGFFVVPLNALLQERGKKSVGAGNAIAVQNLGENSAMLLMLGIYSLAVMIGIPVVPIGIGFGALFALAITALWIWQRRH</sequence>
<protein>
    <recommendedName>
        <fullName evidence="1">Lysophospholipid transporter LplT</fullName>
    </recommendedName>
</protein>